<reference key="1">
    <citation type="journal article" date="2010" name="Stand. Genomic Sci.">
        <title>Complete genome sequence of Rhizobium leguminosarum bv trifolii strain WSM2304, an effective microsymbiont of the South American clover Trifolium polymorphum.</title>
        <authorList>
            <person name="Reeve W."/>
            <person name="O'Hara G."/>
            <person name="Chain P."/>
            <person name="Ardley J."/>
            <person name="Brau L."/>
            <person name="Nandesena K."/>
            <person name="Tiwari R."/>
            <person name="Malfatti S."/>
            <person name="Kiss H."/>
            <person name="Lapidus A."/>
            <person name="Copeland A."/>
            <person name="Nolan M."/>
            <person name="Land M."/>
            <person name="Ivanova N."/>
            <person name="Mavromatis K."/>
            <person name="Markowitz V."/>
            <person name="Kyrpides N."/>
            <person name="Melino V."/>
            <person name="Denton M."/>
            <person name="Yates R."/>
            <person name="Howieson J."/>
        </authorList>
    </citation>
    <scope>NUCLEOTIDE SEQUENCE [LARGE SCALE GENOMIC DNA]</scope>
    <source>
        <strain>WSM2304</strain>
    </source>
</reference>
<accession>B5ZNL4</accession>
<name>GLMM_RHILW</name>
<sequence>MKRRYFGTDGIRGQSNVFPMTPDLAMRVGIAAGTIFRRGNHRHRVVIGKDTRLSGYMLENAMVAGFTAAGLDAFILGPIPTPAVAMLTRSLRCDIGVMISASHNPYEDNGIKLFGPDGYKLSDDLEAEIEDLLEKDLNAQLAKSDDIGRAKRVDGVHDRYIEHAKRTLPRDVTLQGLRIAIDCANGAAYKVAPAVLWELGAEVVTIGNEPNGTNINLNCGSTSPVALQKKVDEVRADIGIALDGDADRVIIVDENGSIVDGDQLMAVIAESWAESQQLRGNGIVATVMSNLGLERFLDDRGMALARTRVGDRYVVEHMRQHNYNVGGEQSGHIVLSDYGTTGDGLVAALQILAAVKRTGRTVSEVCRRFEPVPQLLRNVRISGGKPLEDIQVQKAIADAEAELAKNGRLVIRPSGTEPLIRVMAEGDDRAQIERIVNELIGTISNVRTAA</sequence>
<feature type="chain" id="PRO_1000201130" description="Phosphoglucosamine mutase">
    <location>
        <begin position="1"/>
        <end position="450"/>
    </location>
</feature>
<feature type="active site" description="Phosphoserine intermediate" evidence="1">
    <location>
        <position position="102"/>
    </location>
</feature>
<feature type="binding site" description="via phosphate group" evidence="1">
    <location>
        <position position="102"/>
    </location>
    <ligand>
        <name>Mg(2+)</name>
        <dbReference type="ChEBI" id="CHEBI:18420"/>
    </ligand>
</feature>
<feature type="binding site" evidence="1">
    <location>
        <position position="243"/>
    </location>
    <ligand>
        <name>Mg(2+)</name>
        <dbReference type="ChEBI" id="CHEBI:18420"/>
    </ligand>
</feature>
<feature type="binding site" evidence="1">
    <location>
        <position position="245"/>
    </location>
    <ligand>
        <name>Mg(2+)</name>
        <dbReference type="ChEBI" id="CHEBI:18420"/>
    </ligand>
</feature>
<feature type="binding site" evidence="1">
    <location>
        <position position="247"/>
    </location>
    <ligand>
        <name>Mg(2+)</name>
        <dbReference type="ChEBI" id="CHEBI:18420"/>
    </ligand>
</feature>
<feature type="modified residue" description="Phosphoserine" evidence="1">
    <location>
        <position position="102"/>
    </location>
</feature>
<protein>
    <recommendedName>
        <fullName evidence="1">Phosphoglucosamine mutase</fullName>
        <ecNumber evidence="1">5.4.2.10</ecNumber>
    </recommendedName>
</protein>
<organism>
    <name type="scientific">Rhizobium leguminosarum bv. trifolii (strain WSM2304)</name>
    <dbReference type="NCBI Taxonomy" id="395492"/>
    <lineage>
        <taxon>Bacteria</taxon>
        <taxon>Pseudomonadati</taxon>
        <taxon>Pseudomonadota</taxon>
        <taxon>Alphaproteobacteria</taxon>
        <taxon>Hyphomicrobiales</taxon>
        <taxon>Rhizobiaceae</taxon>
        <taxon>Rhizobium/Agrobacterium group</taxon>
        <taxon>Rhizobium</taxon>
    </lineage>
</organism>
<comment type="function">
    <text evidence="1">Catalyzes the conversion of glucosamine-6-phosphate to glucosamine-1-phosphate.</text>
</comment>
<comment type="catalytic activity">
    <reaction evidence="1">
        <text>alpha-D-glucosamine 1-phosphate = D-glucosamine 6-phosphate</text>
        <dbReference type="Rhea" id="RHEA:23424"/>
        <dbReference type="ChEBI" id="CHEBI:58516"/>
        <dbReference type="ChEBI" id="CHEBI:58725"/>
        <dbReference type="EC" id="5.4.2.10"/>
    </reaction>
</comment>
<comment type="cofactor">
    <cofactor evidence="1">
        <name>Mg(2+)</name>
        <dbReference type="ChEBI" id="CHEBI:18420"/>
    </cofactor>
    <text evidence="1">Binds 1 Mg(2+) ion per subunit.</text>
</comment>
<comment type="PTM">
    <text evidence="1">Activated by phosphorylation.</text>
</comment>
<comment type="similarity">
    <text evidence="1">Belongs to the phosphohexose mutase family.</text>
</comment>
<dbReference type="EC" id="5.4.2.10" evidence="1"/>
<dbReference type="EMBL" id="CP001191">
    <property type="protein sequence ID" value="ACI56462.1"/>
    <property type="molecule type" value="Genomic_DNA"/>
</dbReference>
<dbReference type="RefSeq" id="WP_003590355.1">
    <property type="nucleotide sequence ID" value="NC_011369.1"/>
</dbReference>
<dbReference type="SMR" id="B5ZNL4"/>
<dbReference type="STRING" id="395492.Rleg2_3195"/>
<dbReference type="KEGG" id="rlt:Rleg2_3195"/>
<dbReference type="eggNOG" id="COG1109">
    <property type="taxonomic scope" value="Bacteria"/>
</dbReference>
<dbReference type="HOGENOM" id="CLU_016950_7_0_5"/>
<dbReference type="Proteomes" id="UP000008330">
    <property type="component" value="Chromosome"/>
</dbReference>
<dbReference type="GO" id="GO:0005829">
    <property type="term" value="C:cytosol"/>
    <property type="evidence" value="ECO:0007669"/>
    <property type="project" value="TreeGrafter"/>
</dbReference>
<dbReference type="GO" id="GO:0000287">
    <property type="term" value="F:magnesium ion binding"/>
    <property type="evidence" value="ECO:0007669"/>
    <property type="project" value="UniProtKB-UniRule"/>
</dbReference>
<dbReference type="GO" id="GO:0008966">
    <property type="term" value="F:phosphoglucosamine mutase activity"/>
    <property type="evidence" value="ECO:0007669"/>
    <property type="project" value="UniProtKB-UniRule"/>
</dbReference>
<dbReference type="GO" id="GO:0004615">
    <property type="term" value="F:phosphomannomutase activity"/>
    <property type="evidence" value="ECO:0007669"/>
    <property type="project" value="TreeGrafter"/>
</dbReference>
<dbReference type="GO" id="GO:0005975">
    <property type="term" value="P:carbohydrate metabolic process"/>
    <property type="evidence" value="ECO:0007669"/>
    <property type="project" value="InterPro"/>
</dbReference>
<dbReference type="GO" id="GO:0009252">
    <property type="term" value="P:peptidoglycan biosynthetic process"/>
    <property type="evidence" value="ECO:0007669"/>
    <property type="project" value="TreeGrafter"/>
</dbReference>
<dbReference type="GO" id="GO:0006048">
    <property type="term" value="P:UDP-N-acetylglucosamine biosynthetic process"/>
    <property type="evidence" value="ECO:0007669"/>
    <property type="project" value="TreeGrafter"/>
</dbReference>
<dbReference type="CDD" id="cd05802">
    <property type="entry name" value="GlmM"/>
    <property type="match status" value="1"/>
</dbReference>
<dbReference type="FunFam" id="3.30.310.50:FF:000001">
    <property type="entry name" value="Phosphoglucosamine mutase"/>
    <property type="match status" value="1"/>
</dbReference>
<dbReference type="FunFam" id="3.40.120.10:FF:000001">
    <property type="entry name" value="Phosphoglucosamine mutase"/>
    <property type="match status" value="1"/>
</dbReference>
<dbReference type="FunFam" id="3.40.120.10:FF:000002">
    <property type="entry name" value="Phosphoglucosamine mutase"/>
    <property type="match status" value="1"/>
</dbReference>
<dbReference type="Gene3D" id="3.40.120.10">
    <property type="entry name" value="Alpha-D-Glucose-1,6-Bisphosphate, subunit A, domain 3"/>
    <property type="match status" value="3"/>
</dbReference>
<dbReference type="Gene3D" id="3.30.310.50">
    <property type="entry name" value="Alpha-D-phosphohexomutase, C-terminal domain"/>
    <property type="match status" value="1"/>
</dbReference>
<dbReference type="HAMAP" id="MF_01554_B">
    <property type="entry name" value="GlmM_B"/>
    <property type="match status" value="1"/>
</dbReference>
<dbReference type="InterPro" id="IPR005844">
    <property type="entry name" value="A-D-PHexomutase_a/b/a-I"/>
</dbReference>
<dbReference type="InterPro" id="IPR016055">
    <property type="entry name" value="A-D-PHexomutase_a/b/a-I/II/III"/>
</dbReference>
<dbReference type="InterPro" id="IPR005845">
    <property type="entry name" value="A-D-PHexomutase_a/b/a-II"/>
</dbReference>
<dbReference type="InterPro" id="IPR005846">
    <property type="entry name" value="A-D-PHexomutase_a/b/a-III"/>
</dbReference>
<dbReference type="InterPro" id="IPR005843">
    <property type="entry name" value="A-D-PHexomutase_C"/>
</dbReference>
<dbReference type="InterPro" id="IPR036900">
    <property type="entry name" value="A-D-PHexomutase_C_sf"/>
</dbReference>
<dbReference type="InterPro" id="IPR016066">
    <property type="entry name" value="A-D-PHexomutase_CS"/>
</dbReference>
<dbReference type="InterPro" id="IPR005841">
    <property type="entry name" value="Alpha-D-phosphohexomutase_SF"/>
</dbReference>
<dbReference type="InterPro" id="IPR006352">
    <property type="entry name" value="GlmM_bact"/>
</dbReference>
<dbReference type="InterPro" id="IPR050060">
    <property type="entry name" value="Phosphoglucosamine_mutase"/>
</dbReference>
<dbReference type="NCBIfam" id="TIGR01455">
    <property type="entry name" value="glmM"/>
    <property type="match status" value="1"/>
</dbReference>
<dbReference type="NCBIfam" id="NF008139">
    <property type="entry name" value="PRK10887.1"/>
    <property type="match status" value="1"/>
</dbReference>
<dbReference type="PANTHER" id="PTHR42946:SF1">
    <property type="entry name" value="PHOSPHOGLUCOMUTASE (ALPHA-D-GLUCOSE-1,6-BISPHOSPHATE-DEPENDENT)"/>
    <property type="match status" value="1"/>
</dbReference>
<dbReference type="PANTHER" id="PTHR42946">
    <property type="entry name" value="PHOSPHOHEXOSE MUTASE"/>
    <property type="match status" value="1"/>
</dbReference>
<dbReference type="Pfam" id="PF02878">
    <property type="entry name" value="PGM_PMM_I"/>
    <property type="match status" value="1"/>
</dbReference>
<dbReference type="Pfam" id="PF02879">
    <property type="entry name" value="PGM_PMM_II"/>
    <property type="match status" value="1"/>
</dbReference>
<dbReference type="Pfam" id="PF02880">
    <property type="entry name" value="PGM_PMM_III"/>
    <property type="match status" value="1"/>
</dbReference>
<dbReference type="Pfam" id="PF00408">
    <property type="entry name" value="PGM_PMM_IV"/>
    <property type="match status" value="1"/>
</dbReference>
<dbReference type="PRINTS" id="PR00509">
    <property type="entry name" value="PGMPMM"/>
</dbReference>
<dbReference type="SUPFAM" id="SSF55957">
    <property type="entry name" value="Phosphoglucomutase, C-terminal domain"/>
    <property type="match status" value="1"/>
</dbReference>
<dbReference type="SUPFAM" id="SSF53738">
    <property type="entry name" value="Phosphoglucomutase, first 3 domains"/>
    <property type="match status" value="3"/>
</dbReference>
<dbReference type="PROSITE" id="PS00710">
    <property type="entry name" value="PGM_PMM"/>
    <property type="match status" value="1"/>
</dbReference>
<evidence type="ECO:0000255" key="1">
    <source>
        <dbReference type="HAMAP-Rule" id="MF_01554"/>
    </source>
</evidence>
<keyword id="KW-0413">Isomerase</keyword>
<keyword id="KW-0460">Magnesium</keyword>
<keyword id="KW-0479">Metal-binding</keyword>
<keyword id="KW-0597">Phosphoprotein</keyword>
<keyword id="KW-1185">Reference proteome</keyword>
<gene>
    <name evidence="1" type="primary">glmM</name>
    <name type="ordered locus">Rleg2_3195</name>
</gene>
<proteinExistence type="inferred from homology"/>